<gene>
    <name type="primary">Bsdc1</name>
</gene>
<accession>Q80Y55</accession>
<accession>B2KGE2</accession>
<accession>Q8BI04</accession>
<accession>Q8VDP1</accession>
<keyword id="KW-0597">Phosphoprotein</keyword>
<keyword id="KW-1185">Reference proteome</keyword>
<organism>
    <name type="scientific">Mus musculus</name>
    <name type="common">Mouse</name>
    <dbReference type="NCBI Taxonomy" id="10090"/>
    <lineage>
        <taxon>Eukaryota</taxon>
        <taxon>Metazoa</taxon>
        <taxon>Chordata</taxon>
        <taxon>Craniata</taxon>
        <taxon>Vertebrata</taxon>
        <taxon>Euteleostomi</taxon>
        <taxon>Mammalia</taxon>
        <taxon>Eutheria</taxon>
        <taxon>Euarchontoglires</taxon>
        <taxon>Glires</taxon>
        <taxon>Rodentia</taxon>
        <taxon>Myomorpha</taxon>
        <taxon>Muroidea</taxon>
        <taxon>Muridae</taxon>
        <taxon>Murinae</taxon>
        <taxon>Mus</taxon>
        <taxon>Mus</taxon>
    </lineage>
</organism>
<evidence type="ECO:0000250" key="1">
    <source>
        <dbReference type="UniProtKB" id="Q9NW68"/>
    </source>
</evidence>
<evidence type="ECO:0000255" key="2">
    <source>
        <dbReference type="PROSITE-ProRule" id="PRU00036"/>
    </source>
</evidence>
<evidence type="ECO:0000256" key="3">
    <source>
        <dbReference type="SAM" id="MobiDB-lite"/>
    </source>
</evidence>
<evidence type="ECO:0000305" key="4"/>
<evidence type="ECO:0007744" key="5">
    <source>
    </source>
</evidence>
<sequence length="427" mass="46953">MAEGEDVGWWRSWLQQSYQAVKEKSTEALEFMKRDLTEFTQVVQHDTACTIAATASVVKEKLATEGSSGATEKVKKGLSDFLGVISDTFAPSPDKTIDCDVITLMGTPSGTAEPYDGTKARLYSLQSDPATYCNEPDGPPELFDAWLSEFCLEEKKGEISELLVGSPSIRALYTKMVPAAVSHSEFWHRYFYKVHQLEQEQARRDALKQRADQSISEEPGWEEEEEELEGIVPSPKEAKIPKETKTTTSPEDEPAPQSPCEETPVEPPAEATPSESSESISLVTQVANPAAAPEAPELPKDLSQKLFEASLEEQSLAEDEGETGPPPPPPSKPLTPAGRASGPEPRPPARVETLREEVPTDLRVFELNSDSGKSTPSNNGKKGSSTDISEDWEKDFDLDMTEEEVQMALSKVDASGELEDVEWEDWE</sequence>
<name>BSDC1_MOUSE</name>
<feature type="chain" id="PRO_0000282640" description="BSD domain-containing protein 1">
    <location>
        <begin position="1"/>
        <end position="427"/>
    </location>
</feature>
<feature type="domain" description="BSD" evidence="2">
    <location>
        <begin position="146"/>
        <end position="198"/>
    </location>
</feature>
<feature type="region of interest" description="Disordered" evidence="3">
    <location>
        <begin position="208"/>
        <end position="397"/>
    </location>
</feature>
<feature type="compositionally biased region" description="Acidic residues" evidence="3">
    <location>
        <begin position="219"/>
        <end position="229"/>
    </location>
</feature>
<feature type="compositionally biased region" description="Basic and acidic residues" evidence="3">
    <location>
        <begin position="236"/>
        <end position="245"/>
    </location>
</feature>
<feature type="compositionally biased region" description="Low complexity" evidence="3">
    <location>
        <begin position="268"/>
        <end position="279"/>
    </location>
</feature>
<feature type="compositionally biased region" description="Pro residues" evidence="3">
    <location>
        <begin position="324"/>
        <end position="333"/>
    </location>
</feature>
<feature type="compositionally biased region" description="Basic and acidic residues" evidence="3">
    <location>
        <begin position="347"/>
        <end position="364"/>
    </location>
</feature>
<feature type="compositionally biased region" description="Polar residues" evidence="3">
    <location>
        <begin position="368"/>
        <end position="387"/>
    </location>
</feature>
<feature type="compositionally biased region" description="Acidic residues" evidence="3">
    <location>
        <begin position="388"/>
        <end position="397"/>
    </location>
</feature>
<feature type="modified residue" description="Phosphoserine" evidence="1">
    <location>
        <position position="92"/>
    </location>
</feature>
<feature type="modified residue" description="Phosphoserine" evidence="1">
    <location>
        <position position="166"/>
    </location>
</feature>
<feature type="modified residue" description="Phosphothreonine" evidence="1">
    <location>
        <position position="353"/>
    </location>
</feature>
<feature type="modified residue" description="Phosphoserine" evidence="5">
    <location>
        <position position="384"/>
    </location>
</feature>
<feature type="modified residue" description="Phosphoserine" evidence="1">
    <location>
        <position position="385"/>
    </location>
</feature>
<feature type="modified residue" description="Phosphoserine" evidence="1">
    <location>
        <position position="415"/>
    </location>
</feature>
<feature type="sequence conflict" description="In Ref. 4; AAH21480." evidence="4" ref="4">
    <original>G</original>
    <variation>S</variation>
    <location>
        <position position="338"/>
    </location>
</feature>
<feature type="sequence conflict" description="In Ref. 1; BAC29751." evidence="4" ref="1">
    <original>D</original>
    <variation>G</variation>
    <location>
        <position position="413"/>
    </location>
</feature>
<protein>
    <recommendedName>
        <fullName>BSD domain-containing protein 1</fullName>
    </recommendedName>
</protein>
<dbReference type="EMBL" id="AK037201">
    <property type="protein sequence ID" value="BAC29751.1"/>
    <property type="molecule type" value="mRNA"/>
</dbReference>
<dbReference type="EMBL" id="AK144053">
    <property type="protein sequence ID" value="BAE25672.1"/>
    <property type="molecule type" value="mRNA"/>
</dbReference>
<dbReference type="EMBL" id="CU302431">
    <property type="status" value="NOT_ANNOTATED_CDS"/>
    <property type="molecule type" value="Genomic_DNA"/>
</dbReference>
<dbReference type="EMBL" id="CH466552">
    <property type="protein sequence ID" value="EDL30194.1"/>
    <property type="molecule type" value="Genomic_DNA"/>
</dbReference>
<dbReference type="EMBL" id="BC021480">
    <property type="protein sequence ID" value="AAH21480.1"/>
    <property type="status" value="ALT_INIT"/>
    <property type="molecule type" value="mRNA"/>
</dbReference>
<dbReference type="EMBL" id="BC049111">
    <property type="protein sequence ID" value="AAH49111.1"/>
    <property type="molecule type" value="mRNA"/>
</dbReference>
<dbReference type="CCDS" id="CCDS18692.1"/>
<dbReference type="RefSeq" id="NP_598650.2">
    <property type="nucleotide sequence ID" value="NM_133889.2"/>
</dbReference>
<dbReference type="BioGRID" id="221441">
    <property type="interactions" value="9"/>
</dbReference>
<dbReference type="FunCoup" id="Q80Y55">
    <property type="interactions" value="2223"/>
</dbReference>
<dbReference type="IntAct" id="Q80Y55">
    <property type="interactions" value="7"/>
</dbReference>
<dbReference type="STRING" id="10090.ENSMUSP00000048742"/>
<dbReference type="GlyGen" id="Q80Y55">
    <property type="glycosylation" value="1 site"/>
</dbReference>
<dbReference type="iPTMnet" id="Q80Y55"/>
<dbReference type="PhosphoSitePlus" id="Q80Y55"/>
<dbReference type="SwissPalm" id="Q80Y55"/>
<dbReference type="jPOST" id="Q80Y55"/>
<dbReference type="PaxDb" id="10090-ENSMUSP00000048742"/>
<dbReference type="PeptideAtlas" id="Q80Y55"/>
<dbReference type="ProteomicsDB" id="273802"/>
<dbReference type="Pumba" id="Q80Y55"/>
<dbReference type="Antibodypedia" id="16954">
    <property type="antibodies" value="120 antibodies from 19 providers"/>
</dbReference>
<dbReference type="DNASU" id="100383"/>
<dbReference type="Ensembl" id="ENSMUST00000048162.10">
    <property type="protein sequence ID" value="ENSMUSP00000048742.9"/>
    <property type="gene ID" value="ENSMUSG00000040859.15"/>
</dbReference>
<dbReference type="GeneID" id="100383"/>
<dbReference type="KEGG" id="mmu:100383"/>
<dbReference type="UCSC" id="uc008uxb.1">
    <property type="organism name" value="mouse"/>
</dbReference>
<dbReference type="AGR" id="MGI:1913466"/>
<dbReference type="CTD" id="55108"/>
<dbReference type="MGI" id="MGI:1913466">
    <property type="gene designation" value="Bsdc1"/>
</dbReference>
<dbReference type="VEuPathDB" id="HostDB:ENSMUSG00000040859"/>
<dbReference type="eggNOG" id="KOG2690">
    <property type="taxonomic scope" value="Eukaryota"/>
</dbReference>
<dbReference type="GeneTree" id="ENSGT00390000009361"/>
<dbReference type="HOGENOM" id="CLU_053864_0_0_1"/>
<dbReference type="InParanoid" id="Q80Y55"/>
<dbReference type="OMA" id="TCFLCWF"/>
<dbReference type="OrthoDB" id="73788at2759"/>
<dbReference type="PhylomeDB" id="Q80Y55"/>
<dbReference type="TreeFam" id="TF313210"/>
<dbReference type="BioGRID-ORCS" id="100383">
    <property type="hits" value="3 hits in 77 CRISPR screens"/>
</dbReference>
<dbReference type="ChiTaRS" id="Bsdc1">
    <property type="organism name" value="mouse"/>
</dbReference>
<dbReference type="PRO" id="PR:Q80Y55"/>
<dbReference type="Proteomes" id="UP000000589">
    <property type="component" value="Chromosome 4"/>
</dbReference>
<dbReference type="RNAct" id="Q80Y55">
    <property type="molecule type" value="protein"/>
</dbReference>
<dbReference type="Bgee" id="ENSMUSG00000040859">
    <property type="expression patterns" value="Expressed in embryonic brain and 257 other cell types or tissues"/>
</dbReference>
<dbReference type="ExpressionAtlas" id="Q80Y55">
    <property type="expression patterns" value="baseline and differential"/>
</dbReference>
<dbReference type="Gene3D" id="1.10.3970.10">
    <property type="entry name" value="BSD domain"/>
    <property type="match status" value="1"/>
</dbReference>
<dbReference type="InterPro" id="IPR005607">
    <property type="entry name" value="BSD_dom"/>
</dbReference>
<dbReference type="InterPro" id="IPR035925">
    <property type="entry name" value="BSD_dom_sf"/>
</dbReference>
<dbReference type="InterPro" id="IPR051494">
    <property type="entry name" value="BSD_domain-containing"/>
</dbReference>
<dbReference type="PANTHER" id="PTHR16019:SF5">
    <property type="entry name" value="BSD DOMAIN-CONTAINING PROTEIN 1"/>
    <property type="match status" value="1"/>
</dbReference>
<dbReference type="PANTHER" id="PTHR16019">
    <property type="entry name" value="SYNAPSE-ASSOCIATED PROTEIN"/>
    <property type="match status" value="1"/>
</dbReference>
<dbReference type="Pfam" id="PF03909">
    <property type="entry name" value="BSD"/>
    <property type="match status" value="1"/>
</dbReference>
<dbReference type="SMART" id="SM00751">
    <property type="entry name" value="BSD"/>
    <property type="match status" value="1"/>
</dbReference>
<dbReference type="SUPFAM" id="SSF140383">
    <property type="entry name" value="BSD domain-like"/>
    <property type="match status" value="1"/>
</dbReference>
<dbReference type="PROSITE" id="PS50858">
    <property type="entry name" value="BSD"/>
    <property type="match status" value="1"/>
</dbReference>
<proteinExistence type="evidence at protein level"/>
<comment type="sequence caution" evidence="4">
    <conflict type="erroneous initiation">
        <sequence resource="EMBL-CDS" id="AAH21480"/>
    </conflict>
</comment>
<reference key="1">
    <citation type="journal article" date="2005" name="Science">
        <title>The transcriptional landscape of the mammalian genome.</title>
        <authorList>
            <person name="Carninci P."/>
            <person name="Kasukawa T."/>
            <person name="Katayama S."/>
            <person name="Gough J."/>
            <person name="Frith M.C."/>
            <person name="Maeda N."/>
            <person name="Oyama R."/>
            <person name="Ravasi T."/>
            <person name="Lenhard B."/>
            <person name="Wells C."/>
            <person name="Kodzius R."/>
            <person name="Shimokawa K."/>
            <person name="Bajic V.B."/>
            <person name="Brenner S.E."/>
            <person name="Batalov S."/>
            <person name="Forrest A.R."/>
            <person name="Zavolan M."/>
            <person name="Davis M.J."/>
            <person name="Wilming L.G."/>
            <person name="Aidinis V."/>
            <person name="Allen J.E."/>
            <person name="Ambesi-Impiombato A."/>
            <person name="Apweiler R."/>
            <person name="Aturaliya R.N."/>
            <person name="Bailey T.L."/>
            <person name="Bansal M."/>
            <person name="Baxter L."/>
            <person name="Beisel K.W."/>
            <person name="Bersano T."/>
            <person name="Bono H."/>
            <person name="Chalk A.M."/>
            <person name="Chiu K.P."/>
            <person name="Choudhary V."/>
            <person name="Christoffels A."/>
            <person name="Clutterbuck D.R."/>
            <person name="Crowe M.L."/>
            <person name="Dalla E."/>
            <person name="Dalrymple B.P."/>
            <person name="de Bono B."/>
            <person name="Della Gatta G."/>
            <person name="di Bernardo D."/>
            <person name="Down T."/>
            <person name="Engstrom P."/>
            <person name="Fagiolini M."/>
            <person name="Faulkner G."/>
            <person name="Fletcher C.F."/>
            <person name="Fukushima T."/>
            <person name="Furuno M."/>
            <person name="Futaki S."/>
            <person name="Gariboldi M."/>
            <person name="Georgii-Hemming P."/>
            <person name="Gingeras T.R."/>
            <person name="Gojobori T."/>
            <person name="Green R.E."/>
            <person name="Gustincich S."/>
            <person name="Harbers M."/>
            <person name="Hayashi Y."/>
            <person name="Hensch T.K."/>
            <person name="Hirokawa N."/>
            <person name="Hill D."/>
            <person name="Huminiecki L."/>
            <person name="Iacono M."/>
            <person name="Ikeo K."/>
            <person name="Iwama A."/>
            <person name="Ishikawa T."/>
            <person name="Jakt M."/>
            <person name="Kanapin A."/>
            <person name="Katoh M."/>
            <person name="Kawasawa Y."/>
            <person name="Kelso J."/>
            <person name="Kitamura H."/>
            <person name="Kitano H."/>
            <person name="Kollias G."/>
            <person name="Krishnan S.P."/>
            <person name="Kruger A."/>
            <person name="Kummerfeld S.K."/>
            <person name="Kurochkin I.V."/>
            <person name="Lareau L.F."/>
            <person name="Lazarevic D."/>
            <person name="Lipovich L."/>
            <person name="Liu J."/>
            <person name="Liuni S."/>
            <person name="McWilliam S."/>
            <person name="Madan Babu M."/>
            <person name="Madera M."/>
            <person name="Marchionni L."/>
            <person name="Matsuda H."/>
            <person name="Matsuzawa S."/>
            <person name="Miki H."/>
            <person name="Mignone F."/>
            <person name="Miyake S."/>
            <person name="Morris K."/>
            <person name="Mottagui-Tabar S."/>
            <person name="Mulder N."/>
            <person name="Nakano N."/>
            <person name="Nakauchi H."/>
            <person name="Ng P."/>
            <person name="Nilsson R."/>
            <person name="Nishiguchi S."/>
            <person name="Nishikawa S."/>
            <person name="Nori F."/>
            <person name="Ohara O."/>
            <person name="Okazaki Y."/>
            <person name="Orlando V."/>
            <person name="Pang K.C."/>
            <person name="Pavan W.J."/>
            <person name="Pavesi G."/>
            <person name="Pesole G."/>
            <person name="Petrovsky N."/>
            <person name="Piazza S."/>
            <person name="Reed J."/>
            <person name="Reid J.F."/>
            <person name="Ring B.Z."/>
            <person name="Ringwald M."/>
            <person name="Rost B."/>
            <person name="Ruan Y."/>
            <person name="Salzberg S.L."/>
            <person name="Sandelin A."/>
            <person name="Schneider C."/>
            <person name="Schoenbach C."/>
            <person name="Sekiguchi K."/>
            <person name="Semple C.A."/>
            <person name="Seno S."/>
            <person name="Sessa L."/>
            <person name="Sheng Y."/>
            <person name="Shibata Y."/>
            <person name="Shimada H."/>
            <person name="Shimada K."/>
            <person name="Silva D."/>
            <person name="Sinclair B."/>
            <person name="Sperling S."/>
            <person name="Stupka E."/>
            <person name="Sugiura K."/>
            <person name="Sultana R."/>
            <person name="Takenaka Y."/>
            <person name="Taki K."/>
            <person name="Tammoja K."/>
            <person name="Tan S.L."/>
            <person name="Tang S."/>
            <person name="Taylor M.S."/>
            <person name="Tegner J."/>
            <person name="Teichmann S.A."/>
            <person name="Ueda H.R."/>
            <person name="van Nimwegen E."/>
            <person name="Verardo R."/>
            <person name="Wei C.L."/>
            <person name="Yagi K."/>
            <person name="Yamanishi H."/>
            <person name="Zabarovsky E."/>
            <person name="Zhu S."/>
            <person name="Zimmer A."/>
            <person name="Hide W."/>
            <person name="Bult C."/>
            <person name="Grimmond S.M."/>
            <person name="Teasdale R.D."/>
            <person name="Liu E.T."/>
            <person name="Brusic V."/>
            <person name="Quackenbush J."/>
            <person name="Wahlestedt C."/>
            <person name="Mattick J.S."/>
            <person name="Hume D.A."/>
            <person name="Kai C."/>
            <person name="Sasaki D."/>
            <person name="Tomaru Y."/>
            <person name="Fukuda S."/>
            <person name="Kanamori-Katayama M."/>
            <person name="Suzuki M."/>
            <person name="Aoki J."/>
            <person name="Arakawa T."/>
            <person name="Iida J."/>
            <person name="Imamura K."/>
            <person name="Itoh M."/>
            <person name="Kato T."/>
            <person name="Kawaji H."/>
            <person name="Kawagashira N."/>
            <person name="Kawashima T."/>
            <person name="Kojima M."/>
            <person name="Kondo S."/>
            <person name="Konno H."/>
            <person name="Nakano K."/>
            <person name="Ninomiya N."/>
            <person name="Nishio T."/>
            <person name="Okada M."/>
            <person name="Plessy C."/>
            <person name="Shibata K."/>
            <person name="Shiraki T."/>
            <person name="Suzuki S."/>
            <person name="Tagami M."/>
            <person name="Waki K."/>
            <person name="Watahiki A."/>
            <person name="Okamura-Oho Y."/>
            <person name="Suzuki H."/>
            <person name="Kawai J."/>
            <person name="Hayashizaki Y."/>
        </authorList>
    </citation>
    <scope>NUCLEOTIDE SEQUENCE [LARGE SCALE MRNA]</scope>
    <source>
        <strain>C57BL/6J</strain>
        <tissue>Kidney</tissue>
        <tissue>Skin</tissue>
    </source>
</reference>
<reference key="2">
    <citation type="journal article" date="2009" name="PLoS Biol.">
        <title>Lineage-specific biology revealed by a finished genome assembly of the mouse.</title>
        <authorList>
            <person name="Church D.M."/>
            <person name="Goodstadt L."/>
            <person name="Hillier L.W."/>
            <person name="Zody M.C."/>
            <person name="Goldstein S."/>
            <person name="She X."/>
            <person name="Bult C.J."/>
            <person name="Agarwala R."/>
            <person name="Cherry J.L."/>
            <person name="DiCuccio M."/>
            <person name="Hlavina W."/>
            <person name="Kapustin Y."/>
            <person name="Meric P."/>
            <person name="Maglott D."/>
            <person name="Birtle Z."/>
            <person name="Marques A.C."/>
            <person name="Graves T."/>
            <person name="Zhou S."/>
            <person name="Teague B."/>
            <person name="Potamousis K."/>
            <person name="Churas C."/>
            <person name="Place M."/>
            <person name="Herschleb J."/>
            <person name="Runnheim R."/>
            <person name="Forrest D."/>
            <person name="Amos-Landgraf J."/>
            <person name="Schwartz D.C."/>
            <person name="Cheng Z."/>
            <person name="Lindblad-Toh K."/>
            <person name="Eichler E.E."/>
            <person name="Ponting C.P."/>
        </authorList>
    </citation>
    <scope>NUCLEOTIDE SEQUENCE [LARGE SCALE GENOMIC DNA]</scope>
    <source>
        <strain>NOD</strain>
    </source>
</reference>
<reference key="3">
    <citation type="submission" date="2005-09" db="EMBL/GenBank/DDBJ databases">
        <authorList>
            <person name="Mural R.J."/>
            <person name="Adams M.D."/>
            <person name="Myers E.W."/>
            <person name="Smith H.O."/>
            <person name="Venter J.C."/>
        </authorList>
    </citation>
    <scope>NUCLEOTIDE SEQUENCE [LARGE SCALE GENOMIC DNA]</scope>
</reference>
<reference key="4">
    <citation type="journal article" date="2004" name="Genome Res.">
        <title>The status, quality, and expansion of the NIH full-length cDNA project: the Mammalian Gene Collection (MGC).</title>
        <authorList>
            <consortium name="The MGC Project Team"/>
        </authorList>
    </citation>
    <scope>NUCLEOTIDE SEQUENCE [LARGE SCALE MRNA]</scope>
    <source>
        <strain>C57BL/6J</strain>
        <strain>FVB/N</strain>
        <tissue>Brain</tissue>
        <tissue>Mammary tumor</tissue>
    </source>
</reference>
<reference key="5">
    <citation type="journal article" date="2010" name="Cell">
        <title>A tissue-specific atlas of mouse protein phosphorylation and expression.</title>
        <authorList>
            <person name="Huttlin E.L."/>
            <person name="Jedrychowski M.P."/>
            <person name="Elias J.E."/>
            <person name="Goswami T."/>
            <person name="Rad R."/>
            <person name="Beausoleil S.A."/>
            <person name="Villen J."/>
            <person name="Haas W."/>
            <person name="Sowa M.E."/>
            <person name="Gygi S.P."/>
        </authorList>
    </citation>
    <scope>PHOSPHORYLATION [LARGE SCALE ANALYSIS] AT SER-384</scope>
    <scope>IDENTIFICATION BY MASS SPECTROMETRY [LARGE SCALE ANALYSIS]</scope>
    <source>
        <tissue>Brain</tissue>
        <tissue>Pancreas</tissue>
        <tissue>Spleen</tissue>
        <tissue>Testis</tissue>
    </source>
</reference>